<gene>
    <name evidence="1" type="primary">ureF</name>
    <name type="ordered locus">BQ2027_MB1882</name>
</gene>
<evidence type="ECO:0000255" key="1">
    <source>
        <dbReference type="HAMAP-Rule" id="MF_01385"/>
    </source>
</evidence>
<evidence type="ECO:0000256" key="2">
    <source>
        <dbReference type="SAM" id="MobiDB-lite"/>
    </source>
</evidence>
<name>UREF_MYCBO</name>
<sequence length="211" mass="22337">MTSLAVLLTLADSRLPTGAHVHSGGIEEAIAAGLVTGLATLEAFLKRRVRTHGLLTASIAAAVHRGELAVDDADRETDARTPAPAARHASRSQGRGLIRLARRVWPDSGWEELGPRPHLAVVAGRVGALSGLAPEHNALHLVYITMTGSAIAAQRLLALDPAEVTVVTFQLSELCEQIAQEATAGLADLSDPLLDTLAQRHDERVRPLFVS</sequence>
<organism>
    <name type="scientific">Mycobacterium bovis (strain ATCC BAA-935 / AF2122/97)</name>
    <dbReference type="NCBI Taxonomy" id="233413"/>
    <lineage>
        <taxon>Bacteria</taxon>
        <taxon>Bacillati</taxon>
        <taxon>Actinomycetota</taxon>
        <taxon>Actinomycetes</taxon>
        <taxon>Mycobacteriales</taxon>
        <taxon>Mycobacteriaceae</taxon>
        <taxon>Mycobacterium</taxon>
        <taxon>Mycobacterium tuberculosis complex</taxon>
    </lineage>
</organism>
<keyword id="KW-0143">Chaperone</keyword>
<keyword id="KW-0963">Cytoplasm</keyword>
<keyword id="KW-0996">Nickel insertion</keyword>
<keyword id="KW-1185">Reference proteome</keyword>
<protein>
    <recommendedName>
        <fullName evidence="1">Urease accessory protein UreF</fullName>
    </recommendedName>
</protein>
<feature type="chain" id="PRO_1000145121" description="Urease accessory protein UreF">
    <location>
        <begin position="1"/>
        <end position="211"/>
    </location>
</feature>
<feature type="region of interest" description="Disordered" evidence="2">
    <location>
        <begin position="71"/>
        <end position="93"/>
    </location>
</feature>
<proteinExistence type="inferred from homology"/>
<reference key="1">
    <citation type="journal article" date="2003" name="Proc. Natl. Acad. Sci. U.S.A.">
        <title>The complete genome sequence of Mycobacterium bovis.</title>
        <authorList>
            <person name="Garnier T."/>
            <person name="Eiglmeier K."/>
            <person name="Camus J.-C."/>
            <person name="Medina N."/>
            <person name="Mansoor H."/>
            <person name="Pryor M."/>
            <person name="Duthoy S."/>
            <person name="Grondin S."/>
            <person name="Lacroix C."/>
            <person name="Monsempe C."/>
            <person name="Simon S."/>
            <person name="Harris B."/>
            <person name="Atkin R."/>
            <person name="Doggett J."/>
            <person name="Mayes R."/>
            <person name="Keating L."/>
            <person name="Wheeler P.R."/>
            <person name="Parkhill J."/>
            <person name="Barrell B.G."/>
            <person name="Cole S.T."/>
            <person name="Gordon S.V."/>
            <person name="Hewinson R.G."/>
        </authorList>
    </citation>
    <scope>NUCLEOTIDE SEQUENCE [LARGE SCALE GENOMIC DNA]</scope>
    <source>
        <strain>ATCC BAA-935 / AF2122/97</strain>
    </source>
</reference>
<reference key="2">
    <citation type="journal article" date="2017" name="Genome Announc.">
        <title>Updated reference genome sequence and annotation of Mycobacterium bovis AF2122/97.</title>
        <authorList>
            <person name="Malone K.M."/>
            <person name="Farrell D."/>
            <person name="Stuber T.P."/>
            <person name="Schubert O.T."/>
            <person name="Aebersold R."/>
            <person name="Robbe-Austerman S."/>
            <person name="Gordon S.V."/>
        </authorList>
    </citation>
    <scope>NUCLEOTIDE SEQUENCE [LARGE SCALE GENOMIC DNA]</scope>
    <scope>GENOME REANNOTATION</scope>
    <source>
        <strain>ATCC BAA-935 / AF2122/97</strain>
    </source>
</reference>
<comment type="function">
    <text evidence="1">Required for maturation of urease via the functional incorporation of the urease nickel metallocenter.</text>
</comment>
<comment type="subunit">
    <text evidence="1">UreD, UreF and UreG form a complex that acts as a GTP-hydrolysis-dependent molecular chaperone, activating the urease apoprotein by helping to assemble the nickel containing metallocenter of UreC. The UreE protein probably delivers the nickel.</text>
</comment>
<comment type="subcellular location">
    <subcellularLocation>
        <location evidence="1">Cytoplasm</location>
    </subcellularLocation>
</comment>
<comment type="similarity">
    <text evidence="1">Belongs to the UreF family.</text>
</comment>
<dbReference type="EMBL" id="LT708304">
    <property type="protein sequence ID" value="SIU00486.1"/>
    <property type="molecule type" value="Genomic_DNA"/>
</dbReference>
<dbReference type="RefSeq" id="NP_855534.1">
    <property type="nucleotide sequence ID" value="NC_002945.3"/>
</dbReference>
<dbReference type="RefSeq" id="WP_010950619.1">
    <property type="nucleotide sequence ID" value="NC_002945.4"/>
</dbReference>
<dbReference type="SMR" id="Q7VET6"/>
<dbReference type="KEGG" id="mbo:BQ2027_MB1882"/>
<dbReference type="PATRIC" id="fig|233413.5.peg.2063"/>
<dbReference type="Proteomes" id="UP000001419">
    <property type="component" value="Chromosome"/>
</dbReference>
<dbReference type="GO" id="GO:0005737">
    <property type="term" value="C:cytoplasm"/>
    <property type="evidence" value="ECO:0007669"/>
    <property type="project" value="UniProtKB-SubCell"/>
</dbReference>
<dbReference type="GO" id="GO:0016151">
    <property type="term" value="F:nickel cation binding"/>
    <property type="evidence" value="ECO:0007669"/>
    <property type="project" value="UniProtKB-UniRule"/>
</dbReference>
<dbReference type="Gene3D" id="1.10.4190.10">
    <property type="entry name" value="Urease accessory protein UreF"/>
    <property type="match status" value="1"/>
</dbReference>
<dbReference type="HAMAP" id="MF_01385">
    <property type="entry name" value="UreF"/>
    <property type="match status" value="1"/>
</dbReference>
<dbReference type="InterPro" id="IPR002639">
    <property type="entry name" value="UreF"/>
</dbReference>
<dbReference type="InterPro" id="IPR038277">
    <property type="entry name" value="UreF_sf"/>
</dbReference>
<dbReference type="PANTHER" id="PTHR33620">
    <property type="entry name" value="UREASE ACCESSORY PROTEIN F"/>
    <property type="match status" value="1"/>
</dbReference>
<dbReference type="PANTHER" id="PTHR33620:SF1">
    <property type="entry name" value="UREASE ACCESSORY PROTEIN F"/>
    <property type="match status" value="1"/>
</dbReference>
<dbReference type="Pfam" id="PF01730">
    <property type="entry name" value="UreF"/>
    <property type="match status" value="1"/>
</dbReference>
<dbReference type="PIRSF" id="PIRSF009467">
    <property type="entry name" value="Ureas_acces_UreF"/>
    <property type="match status" value="1"/>
</dbReference>
<accession>Q7VET6</accession>
<accession>A0A1R3XZI7</accession>
<accession>X2BJ66</accession>